<accession>O35137</accession>
<gene>
    <name type="primary">Alx4</name>
</gene>
<feature type="chain" id="PRO_0000048815" description="Homeobox protein aristaless-like 4">
    <location>
        <begin position="1"/>
        <end position="399"/>
    </location>
</feature>
<feature type="DNA-binding region" description="Homeobox" evidence="2">
    <location>
        <begin position="202"/>
        <end position="261"/>
    </location>
</feature>
<feature type="region of interest" description="Disordered" evidence="4">
    <location>
        <begin position="68"/>
        <end position="133"/>
    </location>
</feature>
<feature type="region of interest" description="Disordered" evidence="4">
    <location>
        <begin position="171"/>
        <end position="206"/>
    </location>
</feature>
<feature type="short sequence motif" description="OAR" evidence="3">
    <location>
        <begin position="379"/>
        <end position="392"/>
    </location>
</feature>
<feature type="compositionally biased region" description="Pro residues" evidence="4">
    <location>
        <begin position="92"/>
        <end position="107"/>
    </location>
</feature>
<feature type="modified residue" description="Phosphoserine" evidence="1">
    <location>
        <position position="188"/>
    </location>
</feature>
<feature type="sequence variant" description="In lst; abolishes DNA binding and transcriptional activation." evidence="5">
    <original>R</original>
    <variation>Q</variation>
    <location>
        <position position="206"/>
    </location>
</feature>
<name>ALX4_MOUSE</name>
<keyword id="KW-0010">Activator</keyword>
<keyword id="KW-0217">Developmental protein</keyword>
<keyword id="KW-0225">Disease variant</keyword>
<keyword id="KW-0238">DNA-binding</keyword>
<keyword id="KW-0371">Homeobox</keyword>
<keyword id="KW-0539">Nucleus</keyword>
<keyword id="KW-0597">Phosphoprotein</keyword>
<keyword id="KW-1185">Reference proteome</keyword>
<keyword id="KW-0804">Transcription</keyword>
<keyword id="KW-0805">Transcription regulation</keyword>
<evidence type="ECO:0000250" key="1">
    <source>
        <dbReference type="UniProtKB" id="Q9H161"/>
    </source>
</evidence>
<evidence type="ECO:0000255" key="2">
    <source>
        <dbReference type="PROSITE-ProRule" id="PRU00108"/>
    </source>
</evidence>
<evidence type="ECO:0000255" key="3">
    <source>
        <dbReference type="PROSITE-ProRule" id="PRU00138"/>
    </source>
</evidence>
<evidence type="ECO:0000256" key="4">
    <source>
        <dbReference type="SAM" id="MobiDB-lite"/>
    </source>
</evidence>
<evidence type="ECO:0000269" key="5">
    <source>
    </source>
</evidence>
<evidence type="ECO:0000305" key="6"/>
<organism>
    <name type="scientific">Mus musculus</name>
    <name type="common">Mouse</name>
    <dbReference type="NCBI Taxonomy" id="10090"/>
    <lineage>
        <taxon>Eukaryota</taxon>
        <taxon>Metazoa</taxon>
        <taxon>Chordata</taxon>
        <taxon>Craniata</taxon>
        <taxon>Vertebrata</taxon>
        <taxon>Euteleostomi</taxon>
        <taxon>Mammalia</taxon>
        <taxon>Eutheria</taxon>
        <taxon>Euarchontoglires</taxon>
        <taxon>Glires</taxon>
        <taxon>Rodentia</taxon>
        <taxon>Myomorpha</taxon>
        <taxon>Muroidea</taxon>
        <taxon>Muridae</taxon>
        <taxon>Murinae</taxon>
        <taxon>Mus</taxon>
        <taxon>Mus</taxon>
    </lineage>
</organism>
<protein>
    <recommendedName>
        <fullName>Homeobox protein aristaless-like 4</fullName>
    </recommendedName>
    <alternativeName>
        <fullName>ALX-4</fullName>
    </alternativeName>
</protein>
<dbReference type="EMBL" id="AF001465">
    <property type="protein sequence ID" value="AAC39943.1"/>
    <property type="molecule type" value="mRNA"/>
</dbReference>
<dbReference type="CCDS" id="CCDS16455.1"/>
<dbReference type="PIR" id="JC6522">
    <property type="entry name" value="JC6522"/>
</dbReference>
<dbReference type="RefSeq" id="NP_031468.1">
    <property type="nucleotide sequence ID" value="NM_007442.3"/>
</dbReference>
<dbReference type="BMRB" id="O35137"/>
<dbReference type="SMR" id="O35137"/>
<dbReference type="BioGRID" id="198081">
    <property type="interactions" value="32"/>
</dbReference>
<dbReference type="FunCoup" id="O35137">
    <property type="interactions" value="617"/>
</dbReference>
<dbReference type="IntAct" id="O35137">
    <property type="interactions" value="30"/>
</dbReference>
<dbReference type="STRING" id="10090.ENSMUSP00000047962"/>
<dbReference type="GlyGen" id="O35137">
    <property type="glycosylation" value="1 site"/>
</dbReference>
<dbReference type="iPTMnet" id="O35137"/>
<dbReference type="PhosphoSitePlus" id="O35137"/>
<dbReference type="PaxDb" id="10090-ENSMUSP00000047962"/>
<dbReference type="ProteomicsDB" id="296398"/>
<dbReference type="Antibodypedia" id="13210">
    <property type="antibodies" value="311 antibodies from 23 providers"/>
</dbReference>
<dbReference type="DNASU" id="11695"/>
<dbReference type="Ensembl" id="ENSMUST00000042078.10">
    <property type="protein sequence ID" value="ENSMUSP00000047962.4"/>
    <property type="gene ID" value="ENSMUSG00000040310.13"/>
</dbReference>
<dbReference type="GeneID" id="11695"/>
<dbReference type="KEGG" id="mmu:11695"/>
<dbReference type="UCSC" id="uc012bzt.1">
    <property type="organism name" value="mouse"/>
</dbReference>
<dbReference type="AGR" id="MGI:108359"/>
<dbReference type="CTD" id="60529"/>
<dbReference type="MGI" id="MGI:108359">
    <property type="gene designation" value="Alx4"/>
</dbReference>
<dbReference type="VEuPathDB" id="HostDB:ENSMUSG00000040310"/>
<dbReference type="eggNOG" id="KOG0490">
    <property type="taxonomic scope" value="Eukaryota"/>
</dbReference>
<dbReference type="GeneTree" id="ENSGT00940000159662"/>
<dbReference type="HOGENOM" id="CLU_047013_0_0_1"/>
<dbReference type="InParanoid" id="O35137"/>
<dbReference type="OMA" id="PCYGKDN"/>
<dbReference type="OrthoDB" id="6159439at2759"/>
<dbReference type="PhylomeDB" id="O35137"/>
<dbReference type="TreeFam" id="TF350743"/>
<dbReference type="BioGRID-ORCS" id="11695">
    <property type="hits" value="2 hits in 76 CRISPR screens"/>
</dbReference>
<dbReference type="PRO" id="PR:O35137"/>
<dbReference type="Proteomes" id="UP000000589">
    <property type="component" value="Chromosome 2"/>
</dbReference>
<dbReference type="RNAct" id="O35137">
    <property type="molecule type" value="protein"/>
</dbReference>
<dbReference type="Bgee" id="ENSMUSG00000040310">
    <property type="expression patterns" value="Expressed in mesenchyme of fronto-nasal process and 68 other cell types or tissues"/>
</dbReference>
<dbReference type="ExpressionAtlas" id="O35137">
    <property type="expression patterns" value="baseline and differential"/>
</dbReference>
<dbReference type="GO" id="GO:0005654">
    <property type="term" value="C:nucleoplasm"/>
    <property type="evidence" value="ECO:0007669"/>
    <property type="project" value="Ensembl"/>
</dbReference>
<dbReference type="GO" id="GO:0005634">
    <property type="term" value="C:nucleus"/>
    <property type="evidence" value="ECO:0000314"/>
    <property type="project" value="MGI"/>
</dbReference>
<dbReference type="GO" id="GO:0005667">
    <property type="term" value="C:transcription regulator complex"/>
    <property type="evidence" value="ECO:0000314"/>
    <property type="project" value="MGI"/>
</dbReference>
<dbReference type="GO" id="GO:0001228">
    <property type="term" value="F:DNA-binding transcription activator activity, RNA polymerase II-specific"/>
    <property type="evidence" value="ECO:0000314"/>
    <property type="project" value="NTNU_SB"/>
</dbReference>
<dbReference type="GO" id="GO:0003700">
    <property type="term" value="F:DNA-binding transcription factor activity"/>
    <property type="evidence" value="ECO:0000314"/>
    <property type="project" value="MGI"/>
</dbReference>
<dbReference type="GO" id="GO:0071837">
    <property type="term" value="F:HMG box domain binding"/>
    <property type="evidence" value="ECO:0000353"/>
    <property type="project" value="UniProtKB"/>
</dbReference>
<dbReference type="GO" id="GO:0000977">
    <property type="term" value="F:RNA polymerase II transcription regulatory region sequence-specific DNA binding"/>
    <property type="evidence" value="ECO:0000314"/>
    <property type="project" value="NTNU_SB"/>
</dbReference>
<dbReference type="GO" id="GO:0043565">
    <property type="term" value="F:sequence-specific DNA binding"/>
    <property type="evidence" value="ECO:0000314"/>
    <property type="project" value="MGI"/>
</dbReference>
<dbReference type="GO" id="GO:0009952">
    <property type="term" value="P:anterior/posterior pattern specification"/>
    <property type="evidence" value="ECO:0000315"/>
    <property type="project" value="MGI"/>
</dbReference>
<dbReference type="GO" id="GO:0048565">
    <property type="term" value="P:digestive tract development"/>
    <property type="evidence" value="ECO:0000315"/>
    <property type="project" value="MGI"/>
</dbReference>
<dbReference type="GO" id="GO:0042733">
    <property type="term" value="P:embryonic digit morphogenesis"/>
    <property type="evidence" value="ECO:0000315"/>
    <property type="project" value="MGI"/>
</dbReference>
<dbReference type="GO" id="GO:0035115">
    <property type="term" value="P:embryonic forelimb morphogenesis"/>
    <property type="evidence" value="ECO:0000316"/>
    <property type="project" value="MGI"/>
</dbReference>
<dbReference type="GO" id="GO:0035116">
    <property type="term" value="P:embryonic hindlimb morphogenesis"/>
    <property type="evidence" value="ECO:0000316"/>
    <property type="project" value="MGI"/>
</dbReference>
<dbReference type="GO" id="GO:0048704">
    <property type="term" value="P:embryonic skeletal system morphogenesis"/>
    <property type="evidence" value="ECO:0000315"/>
    <property type="project" value="MGI"/>
</dbReference>
<dbReference type="GO" id="GO:0001942">
    <property type="term" value="P:hair follicle development"/>
    <property type="evidence" value="ECO:0007669"/>
    <property type="project" value="Ensembl"/>
</dbReference>
<dbReference type="GO" id="GO:0035108">
    <property type="term" value="P:limb morphogenesis"/>
    <property type="evidence" value="ECO:0000315"/>
    <property type="project" value="MGI"/>
</dbReference>
<dbReference type="GO" id="GO:0007517">
    <property type="term" value="P:muscle organ development"/>
    <property type="evidence" value="ECO:0000315"/>
    <property type="project" value="MGI"/>
</dbReference>
<dbReference type="GO" id="GO:0007389">
    <property type="term" value="P:pattern specification process"/>
    <property type="evidence" value="ECO:0000316"/>
    <property type="project" value="MGI"/>
</dbReference>
<dbReference type="GO" id="GO:0045944">
    <property type="term" value="P:positive regulation of transcription by RNA polymerase II"/>
    <property type="evidence" value="ECO:0000314"/>
    <property type="project" value="NTNU_SB"/>
</dbReference>
<dbReference type="GO" id="GO:0009791">
    <property type="term" value="P:post-embryonic development"/>
    <property type="evidence" value="ECO:0000315"/>
    <property type="project" value="MGI"/>
</dbReference>
<dbReference type="GO" id="GO:0042981">
    <property type="term" value="P:regulation of apoptotic process"/>
    <property type="evidence" value="ECO:0000316"/>
    <property type="project" value="MGI"/>
</dbReference>
<dbReference type="GO" id="GO:0006357">
    <property type="term" value="P:regulation of transcription by RNA polymerase II"/>
    <property type="evidence" value="ECO:0000314"/>
    <property type="project" value="MGI"/>
</dbReference>
<dbReference type="GO" id="GO:0060021">
    <property type="term" value="P:roof of mouth development"/>
    <property type="evidence" value="ECO:0000316"/>
    <property type="project" value="MGI"/>
</dbReference>
<dbReference type="GO" id="GO:0048705">
    <property type="term" value="P:skeletal system morphogenesis"/>
    <property type="evidence" value="ECO:0000315"/>
    <property type="project" value="MGI"/>
</dbReference>
<dbReference type="CDD" id="cd00086">
    <property type="entry name" value="homeodomain"/>
    <property type="match status" value="1"/>
</dbReference>
<dbReference type="FunFam" id="1.10.10.60:FF:000127">
    <property type="entry name" value="homeobox protein aristaless-like 4"/>
    <property type="match status" value="1"/>
</dbReference>
<dbReference type="Gene3D" id="1.10.10.60">
    <property type="entry name" value="Homeodomain-like"/>
    <property type="match status" value="1"/>
</dbReference>
<dbReference type="InterPro" id="IPR001356">
    <property type="entry name" value="HD"/>
</dbReference>
<dbReference type="InterPro" id="IPR017970">
    <property type="entry name" value="Homeobox_CS"/>
</dbReference>
<dbReference type="InterPro" id="IPR009057">
    <property type="entry name" value="Homeodomain-like_sf"/>
</dbReference>
<dbReference type="InterPro" id="IPR003654">
    <property type="entry name" value="OAR_dom"/>
</dbReference>
<dbReference type="InterPro" id="IPR050649">
    <property type="entry name" value="Paired_Homeobox_TFs"/>
</dbReference>
<dbReference type="PANTHER" id="PTHR24329">
    <property type="entry name" value="HOMEOBOX PROTEIN ARISTALESS"/>
    <property type="match status" value="1"/>
</dbReference>
<dbReference type="PANTHER" id="PTHR24329:SF322">
    <property type="entry name" value="HOMEOBOX PROTEIN ARISTALESS-LIKE 4"/>
    <property type="match status" value="1"/>
</dbReference>
<dbReference type="Pfam" id="PF00046">
    <property type="entry name" value="Homeodomain"/>
    <property type="match status" value="1"/>
</dbReference>
<dbReference type="Pfam" id="PF03826">
    <property type="entry name" value="OAR"/>
    <property type="match status" value="1"/>
</dbReference>
<dbReference type="SMART" id="SM00389">
    <property type="entry name" value="HOX"/>
    <property type="match status" value="1"/>
</dbReference>
<dbReference type="SUPFAM" id="SSF46689">
    <property type="entry name" value="Homeodomain-like"/>
    <property type="match status" value="1"/>
</dbReference>
<dbReference type="PROSITE" id="PS00027">
    <property type="entry name" value="HOMEOBOX_1"/>
    <property type="match status" value="1"/>
</dbReference>
<dbReference type="PROSITE" id="PS50071">
    <property type="entry name" value="HOMEOBOX_2"/>
    <property type="match status" value="1"/>
</dbReference>
<dbReference type="PROSITE" id="PS50803">
    <property type="entry name" value="OAR"/>
    <property type="match status" value="1"/>
</dbReference>
<comment type="function">
    <text>Transcription factor involved in skull and limb development.</text>
</comment>
<comment type="subunit">
    <text>Binds DNA.</text>
</comment>
<comment type="subcellular location">
    <subcellularLocation>
        <location>Nucleus</location>
    </subcellularLocation>
</comment>
<comment type="tissue specificity">
    <text>Expressed in osteoblasts. Not expressed in brain, heart, intestine, kidney, liver, muscle, spleen and testis.</text>
</comment>
<comment type="developmental stage">
    <text>Expressed from 8.25 dpc and confined to mesenchymal cells throughout the embryo development. Expression is seen at several sites including craniofacial region, first branchial arch and anterior aspect of the limb bud.</text>
</comment>
<comment type="disease">
    <text evidence="5">Defects in Alx4 are the cause of Strong luxoid (lst) phenotype. At heterozygosity lst is characterized by preaxial abnormalities of the hindfeet and, very rarely, of the forefeet. Homozygotes show preaxial polydactyly of all four limbs, reductions and duplications of the radius, absence of the tibia, craniofacial defects, reduction of the pubis, and dorsal alopecia.</text>
</comment>
<comment type="similarity">
    <text evidence="6">Belongs to the paired homeobox family.</text>
</comment>
<reference key="1">
    <citation type="journal article" date="1997" name="Gene">
        <title>Alx-4: cDNA cloning and characterization of a novel paired-type homeodomain protein.</title>
        <authorList>
            <person name="Qu S."/>
            <person name="Li L."/>
            <person name="Wisdom R."/>
        </authorList>
    </citation>
    <scope>NUCLEOTIDE SEQUENCE [MRNA]</scope>
    <source>
        <strain>C57BL/6J</strain>
        <tissue>Embryo</tissue>
    </source>
</reference>
<reference key="2">
    <citation type="journal article" date="1998" name="Development">
        <title>Mutations in mouse Aristaless-like4 cause Strong's luxoid polydactyly.</title>
        <authorList>
            <person name="Qu S."/>
            <person name="Tucker S.C."/>
            <person name="Ehrlich J.S."/>
            <person name="Levorse J.M."/>
            <person name="Flaherty L.A."/>
            <person name="Wisdom R."/>
            <person name="Vogt T.F."/>
        </authorList>
    </citation>
    <scope>VARIANT LST GLN-206</scope>
</reference>
<proteinExistence type="evidence at protein level"/>
<sequence length="399" mass="42763">MNAETCVSYCESPAAAMDAYYSPVSQSREGSSPFRGFPGGDKFGTTFLSAGAKGQGFGDAKSRARYGAGQQDLAAPLESSSGARGSFNKFQPQPPTPQPPPAPPAPPAHLYLQRGACKTPPDGSLKLQEGSGGHNAALQVPCYAKESNLGEPELPPDSEPVGMDNSYLSVKETGAKGPQDRASAEIPSPLEKTDSESNKGKKRRNRTTFTSYQLEELEKVFQKTHYPDVYAREQLAMRTDLTEARVQVWFQNRRAKWRKRERFGQMQQVRTHFSTAYELPLLTRAENYAQIQNPSWIGNNGAASPVPACVVPCDPVPACMSPHAHPPGSGASSVSDFLSVSGAGSHVGQTHMGSLFGAAGISPGLNGYEMNGEPDRKTSSIAALRMKAKEHSAAISWAT</sequence>